<protein>
    <recommendedName>
        <fullName>Nucleoporin nup184</fullName>
    </recommendedName>
    <alternativeName>
        <fullName>Nuclear pore protein nup184</fullName>
    </alternativeName>
</protein>
<dbReference type="EMBL" id="AF055035">
    <property type="protein sequence ID" value="AAD43830.1"/>
    <property type="status" value="ALT_FRAME"/>
    <property type="molecule type" value="Genomic_DNA"/>
</dbReference>
<dbReference type="EMBL" id="CU329670">
    <property type="protein sequence ID" value="CAB76031.1"/>
    <property type="molecule type" value="Genomic_DNA"/>
</dbReference>
<dbReference type="PIR" id="T43682">
    <property type="entry name" value="T43682"/>
</dbReference>
<dbReference type="RefSeq" id="NP_593414.1">
    <property type="nucleotide sequence ID" value="NM_001018847.2"/>
</dbReference>
<dbReference type="SMR" id="Q9P7M8"/>
<dbReference type="BioGRID" id="278264">
    <property type="interactions" value="8"/>
</dbReference>
<dbReference type="FunCoup" id="Q9P7M8">
    <property type="interactions" value="97"/>
</dbReference>
<dbReference type="STRING" id="284812.Q9P7M8"/>
<dbReference type="iPTMnet" id="Q9P7M8"/>
<dbReference type="PaxDb" id="4896-SPAP27G11.10c.1"/>
<dbReference type="EnsemblFungi" id="SPAP27G11.10c.1">
    <property type="protein sequence ID" value="SPAP27G11.10c.1:pep"/>
    <property type="gene ID" value="SPAP27G11.10c"/>
</dbReference>
<dbReference type="GeneID" id="2541770"/>
<dbReference type="KEGG" id="spo:2541770"/>
<dbReference type="PomBase" id="SPAP27G11.10c">
    <property type="gene designation" value="nup184"/>
</dbReference>
<dbReference type="VEuPathDB" id="FungiDB:SPAP27G11.10c"/>
<dbReference type="eggNOG" id="ENOG502QQFV">
    <property type="taxonomic scope" value="Eukaryota"/>
</dbReference>
<dbReference type="HOGENOM" id="CLU_001029_0_0_1"/>
<dbReference type="InParanoid" id="Q9P7M8"/>
<dbReference type="OMA" id="HSWKFFA"/>
<dbReference type="PhylomeDB" id="Q9P7M8"/>
<dbReference type="Reactome" id="R-SPO-159227">
    <property type="pathway name" value="Transport of the SLBP independent Mature mRNA"/>
</dbReference>
<dbReference type="Reactome" id="R-SPO-159231">
    <property type="pathway name" value="Transport of Mature mRNA Derived from an Intronless Transcript"/>
</dbReference>
<dbReference type="Reactome" id="R-SPO-159236">
    <property type="pathway name" value="Transport of Mature mRNA derived from an Intron-Containing Transcript"/>
</dbReference>
<dbReference type="Reactome" id="R-SPO-3371453">
    <property type="pathway name" value="Regulation of HSF1-mediated heat shock response"/>
</dbReference>
<dbReference type="Reactome" id="R-SPO-4085377">
    <property type="pathway name" value="SUMOylation of SUMOylation proteins"/>
</dbReference>
<dbReference type="Reactome" id="R-SPO-4551638">
    <property type="pathway name" value="SUMOylation of chromatin organization proteins"/>
</dbReference>
<dbReference type="Reactome" id="R-SPO-4570464">
    <property type="pathway name" value="SUMOylation of RNA binding proteins"/>
</dbReference>
<dbReference type="Reactome" id="R-SPO-5578749">
    <property type="pathway name" value="Transcriptional regulation by small RNAs"/>
</dbReference>
<dbReference type="Reactome" id="R-SPO-9615933">
    <property type="pathway name" value="Postmitotic nuclear pore complex (NPC) reformation"/>
</dbReference>
<dbReference type="PRO" id="PR:Q9P7M8"/>
<dbReference type="Proteomes" id="UP000002485">
    <property type="component" value="Chromosome I"/>
</dbReference>
<dbReference type="GO" id="GO:0005643">
    <property type="term" value="C:nuclear pore"/>
    <property type="evidence" value="ECO:0000314"/>
    <property type="project" value="PomBase"/>
</dbReference>
<dbReference type="GO" id="GO:0044611">
    <property type="term" value="C:nuclear pore inner ring"/>
    <property type="evidence" value="ECO:0000318"/>
    <property type="project" value="GO_Central"/>
</dbReference>
<dbReference type="GO" id="GO:0017056">
    <property type="term" value="F:structural constituent of nuclear pore"/>
    <property type="evidence" value="ECO:0000318"/>
    <property type="project" value="GO_Central"/>
</dbReference>
<dbReference type="GO" id="GO:0006406">
    <property type="term" value="P:mRNA export from nucleus"/>
    <property type="evidence" value="ECO:0000316"/>
    <property type="project" value="PomBase"/>
</dbReference>
<dbReference type="GO" id="GO:0006607">
    <property type="term" value="P:NLS-bearing protein import into nucleus"/>
    <property type="evidence" value="ECO:0000266"/>
    <property type="project" value="PomBase"/>
</dbReference>
<dbReference type="GO" id="GO:0006611">
    <property type="term" value="P:protein export from nucleus"/>
    <property type="evidence" value="ECO:0000266"/>
    <property type="project" value="PomBase"/>
</dbReference>
<dbReference type="GO" id="GO:0006606">
    <property type="term" value="P:protein import into nucleus"/>
    <property type="evidence" value="ECO:0000318"/>
    <property type="project" value="GO_Central"/>
</dbReference>
<dbReference type="GO" id="GO:0006405">
    <property type="term" value="P:RNA export from nucleus"/>
    <property type="evidence" value="ECO:0000318"/>
    <property type="project" value="GO_Central"/>
</dbReference>
<dbReference type="Gene3D" id="1.25.10.70">
    <property type="match status" value="1"/>
</dbReference>
<dbReference type="InterPro" id="IPR044840">
    <property type="entry name" value="Nup188"/>
</dbReference>
<dbReference type="InterPro" id="IPR041634">
    <property type="entry name" value="Nup188_C"/>
</dbReference>
<dbReference type="InterPro" id="IPR048883">
    <property type="entry name" value="Nup188_N-subdom_III"/>
</dbReference>
<dbReference type="PANTHER" id="PTHR31431:SF1">
    <property type="entry name" value="NUCLEOPORIN NUP188"/>
    <property type="match status" value="1"/>
</dbReference>
<dbReference type="PANTHER" id="PTHR31431">
    <property type="entry name" value="NUCLEOPORIN NUP188 HOMOLOG"/>
    <property type="match status" value="1"/>
</dbReference>
<dbReference type="Pfam" id="PF18378">
    <property type="entry name" value="Nup188_C"/>
    <property type="match status" value="1"/>
</dbReference>
<dbReference type="Pfam" id="PF21093">
    <property type="entry name" value="Nup188_N-subdom_III"/>
    <property type="match status" value="1"/>
</dbReference>
<name>NU184_SCHPO</name>
<organism>
    <name type="scientific">Schizosaccharomyces pombe (strain 972 / ATCC 24843)</name>
    <name type="common">Fission yeast</name>
    <dbReference type="NCBI Taxonomy" id="284812"/>
    <lineage>
        <taxon>Eukaryota</taxon>
        <taxon>Fungi</taxon>
        <taxon>Dikarya</taxon>
        <taxon>Ascomycota</taxon>
        <taxon>Taphrinomycotina</taxon>
        <taxon>Schizosaccharomycetes</taxon>
        <taxon>Schizosaccharomycetales</taxon>
        <taxon>Schizosaccharomycetaceae</taxon>
        <taxon>Schizosaccharomyces</taxon>
    </lineage>
</organism>
<comment type="function">
    <text evidence="1">Interacts with pom152 in the core structure of the nuclear pore complex (NPC). Involved in the export of mRNA.</text>
</comment>
<comment type="subcellular location">
    <subcellularLocation>
        <location evidence="1">Nucleus</location>
        <location evidence="1">Nuclear pore complex</location>
    </subcellularLocation>
</comment>
<comment type="sequence caution" evidence="2">
    <conflict type="frameshift">
        <sequence resource="EMBL-CDS" id="AAD43830"/>
    </conflict>
</comment>
<sequence>MGDYLLSWSWILDAFETSDENLSQNKFEELLDARIAAFQQIESPVTGTLNSNKTTEGEEAKLSIYDSSHSISKSQLESVKKISDITGYNEAQVAYVLLVHQYELNTQYFSQLDNDSVLAQEFQRRYYAEIISCWKVLAFLLQACTDADSKWHKMATRLIVSIFQTAQRSGENAQSTTPSIFCVRIIDYLSKMTSQAAPASLTFNGEEAISQWYFFHFNLQLQLLRVIFLSTYSLVVCNSEMAISWFNCMKKTRYLHDQEFMHLDIDTGFSMCKEITNVAIIISINFISLEKQVLSFKDNPSFFMLSGNTIISLHDMITQLSNDSIGAAVSLTWGIALHLLSNSPDNIPLIQNSSVVSSKILQNPQNSFQALIIAALKYDPFTLIHRIISSLEDDPYIDGYSKIMATLFSSAVSYVKFSDSTMLCATTLFKTPQVYQLFENNDSVTRLLNFARARFPFEYSQFVLLLIPTFACLTSKQLVSSELLHMTTFTQSLPSGFKAYEIIPEPNVTGNALIELQESLHLDSYGFFFPNAERSLPKGTRGRIVSVDTYPPVVMWDLNYSLWEAVGISLNYIVRNGLINSHKSFVLTVLSSSVPLFQTDVSGACELVHLASEGLDGELDFINVICDLLDYFLSLSVIEDADYQICVSSLRLLREFTRFAATDVWAYVTRSLVCVGSEKGISLEDVIFDYESINGVYDFTLAFFDLYEILLDNCISTSVVPDDFSIRLKTDFVKRAMRFLCEVFANYLDWKYARIIQQYQIGHRFASLITKLLNVTFGIEYFNPKTTVNKKTLPLRELSHYIVQRFLVQQDSNRYLHPLLSVMDLINLLYTDIFSTISSPRAKAAKMWLISSFCAMKTLICLRGFLNLKPSELERELFSRSPDLFNCLPRLLCCIAPILQLLSALILAPWPSETPSLLAYMINSTDIVGRVCIQILTNPIQSTNIEGSVWKFLSSIMKGQQQGLAVLLFSGKKFPLDRMKSLNHNVDVQLTSKSLISLAEKRLDSFSINDILSQVPVFEFIFLSRNFWTASLGNLQQEANFWNRIVDAIKLPLTVKLDGLSSVAQADLYILAAHATRITAIQLHMSKLNKSNSSKKIIIDPLKDSMKDLVQHAFTITAYDSNIHNALTRAFKHENGDLHISDLRNTGLFPLRYGDNYFYNIKLAKNMLLNTEDTSFKISMMMSANENLSLLDAQAALLRSWSIFICAFVEFVKEDATLSILELKIMKWVLKSLAEDTIDVNVVQELSAERAALVFRISQQTLAIPISNEVKEHLQSILLLTWKAITTTKFSIYEDSNGEMAYYRPLLHVLYNTLNRLLSEEKENLSLSVGFVSGLLQLCHRKLSQLFEKAVINPTIEVYGDIVLLNSLHKCIVNSHLIRGLQSLYISYINDSFSVDNCLRLFSWSHSLLVDGQPYFADAALSFLLICSSSPAGAEQIVMNGFFYSIMESPLSTALSTGGLGLDGSSIQYKIWIRGILPLLFNIVKFLGNRIMNDMREFVLLAFPQIQYALLNWCQPPSSISLASIDESFMIVLLFDLLQQFNPALLQEIRLAELKIEMLEASTI</sequence>
<proteinExistence type="predicted"/>
<evidence type="ECO:0000269" key="1">
    <source>
    </source>
</evidence>
<evidence type="ECO:0000305" key="2"/>
<gene>
    <name type="primary">nup184</name>
    <name type="ORF">SPAP27G11.10c</name>
</gene>
<reference key="1">
    <citation type="journal article" date="1999" name="Genetics">
        <title>Regulation of mRNA export by nutritional status in fission yeast.</title>
        <authorList>
            <person name="Whalen W.A."/>
            <person name="Yoon J.H."/>
            <person name="Shen R."/>
            <person name="Dhar R."/>
        </authorList>
    </citation>
    <scope>NUCLEOTIDE SEQUENCE [GENOMIC DNA]</scope>
    <scope>FUNCTION</scope>
    <scope>SUBCELLULAR LOCATION</scope>
    <source>
        <strain>972 / ATCC 24843</strain>
    </source>
</reference>
<reference key="2">
    <citation type="journal article" date="2002" name="Nature">
        <title>The genome sequence of Schizosaccharomyces pombe.</title>
        <authorList>
            <person name="Wood V."/>
            <person name="Gwilliam R."/>
            <person name="Rajandream M.A."/>
            <person name="Lyne M.H."/>
            <person name="Lyne R."/>
            <person name="Stewart A."/>
            <person name="Sgouros J.G."/>
            <person name="Peat N."/>
            <person name="Hayles J."/>
            <person name="Baker S.G."/>
            <person name="Basham D."/>
            <person name="Bowman S."/>
            <person name="Brooks K."/>
            <person name="Brown D."/>
            <person name="Brown S."/>
            <person name="Chillingworth T."/>
            <person name="Churcher C.M."/>
            <person name="Collins M."/>
            <person name="Connor R."/>
            <person name="Cronin A."/>
            <person name="Davis P."/>
            <person name="Feltwell T."/>
            <person name="Fraser A."/>
            <person name="Gentles S."/>
            <person name="Goble A."/>
            <person name="Hamlin N."/>
            <person name="Harris D.E."/>
            <person name="Hidalgo J."/>
            <person name="Hodgson G."/>
            <person name="Holroyd S."/>
            <person name="Hornsby T."/>
            <person name="Howarth S."/>
            <person name="Huckle E.J."/>
            <person name="Hunt S."/>
            <person name="Jagels K."/>
            <person name="James K.D."/>
            <person name="Jones L."/>
            <person name="Jones M."/>
            <person name="Leather S."/>
            <person name="McDonald S."/>
            <person name="McLean J."/>
            <person name="Mooney P."/>
            <person name="Moule S."/>
            <person name="Mungall K.L."/>
            <person name="Murphy L.D."/>
            <person name="Niblett D."/>
            <person name="Odell C."/>
            <person name="Oliver K."/>
            <person name="O'Neil S."/>
            <person name="Pearson D."/>
            <person name="Quail M.A."/>
            <person name="Rabbinowitsch E."/>
            <person name="Rutherford K.M."/>
            <person name="Rutter S."/>
            <person name="Saunders D."/>
            <person name="Seeger K."/>
            <person name="Sharp S."/>
            <person name="Skelton J."/>
            <person name="Simmonds M.N."/>
            <person name="Squares R."/>
            <person name="Squares S."/>
            <person name="Stevens K."/>
            <person name="Taylor K."/>
            <person name="Taylor R.G."/>
            <person name="Tivey A."/>
            <person name="Walsh S.V."/>
            <person name="Warren T."/>
            <person name="Whitehead S."/>
            <person name="Woodward J.R."/>
            <person name="Volckaert G."/>
            <person name="Aert R."/>
            <person name="Robben J."/>
            <person name="Grymonprez B."/>
            <person name="Weltjens I."/>
            <person name="Vanstreels E."/>
            <person name="Rieger M."/>
            <person name="Schaefer M."/>
            <person name="Mueller-Auer S."/>
            <person name="Gabel C."/>
            <person name="Fuchs M."/>
            <person name="Duesterhoeft A."/>
            <person name="Fritzc C."/>
            <person name="Holzer E."/>
            <person name="Moestl D."/>
            <person name="Hilbert H."/>
            <person name="Borzym K."/>
            <person name="Langer I."/>
            <person name="Beck A."/>
            <person name="Lehrach H."/>
            <person name="Reinhardt R."/>
            <person name="Pohl T.M."/>
            <person name="Eger P."/>
            <person name="Zimmermann W."/>
            <person name="Wedler H."/>
            <person name="Wambutt R."/>
            <person name="Purnelle B."/>
            <person name="Goffeau A."/>
            <person name="Cadieu E."/>
            <person name="Dreano S."/>
            <person name="Gloux S."/>
            <person name="Lelaure V."/>
            <person name="Mottier S."/>
            <person name="Galibert F."/>
            <person name="Aves S.J."/>
            <person name="Xiang Z."/>
            <person name="Hunt C."/>
            <person name="Moore K."/>
            <person name="Hurst S.M."/>
            <person name="Lucas M."/>
            <person name="Rochet M."/>
            <person name="Gaillardin C."/>
            <person name="Tallada V.A."/>
            <person name="Garzon A."/>
            <person name="Thode G."/>
            <person name="Daga R.R."/>
            <person name="Cruzado L."/>
            <person name="Jimenez J."/>
            <person name="Sanchez M."/>
            <person name="del Rey F."/>
            <person name="Benito J."/>
            <person name="Dominguez A."/>
            <person name="Revuelta J.L."/>
            <person name="Moreno S."/>
            <person name="Armstrong J."/>
            <person name="Forsburg S.L."/>
            <person name="Cerutti L."/>
            <person name="Lowe T."/>
            <person name="McCombie W.R."/>
            <person name="Paulsen I."/>
            <person name="Potashkin J."/>
            <person name="Shpakovski G.V."/>
            <person name="Ussery D."/>
            <person name="Barrell B.G."/>
            <person name="Nurse P."/>
        </authorList>
    </citation>
    <scope>NUCLEOTIDE SEQUENCE [LARGE SCALE GENOMIC DNA]</scope>
    <source>
        <strain>972 / ATCC 24843</strain>
    </source>
</reference>
<keyword id="KW-0509">mRNA transport</keyword>
<keyword id="KW-0906">Nuclear pore complex</keyword>
<keyword id="KW-0539">Nucleus</keyword>
<keyword id="KW-0653">Protein transport</keyword>
<keyword id="KW-1185">Reference proteome</keyword>
<keyword id="KW-0811">Translocation</keyword>
<keyword id="KW-0813">Transport</keyword>
<feature type="chain" id="PRO_0000204855" description="Nucleoporin nup184">
    <location>
        <begin position="1"/>
        <end position="1564"/>
    </location>
</feature>
<feature type="sequence conflict" description="In Ref. 1; AAD43830." evidence="2" ref="1">
    <original>S</original>
    <variation>P</variation>
    <location>
        <position position="1219"/>
    </location>
</feature>
<accession>Q9P7M8</accession>
<accession>Q9Y8G4</accession>